<name>PLSX_CYAP4</name>
<comment type="function">
    <text evidence="1">Catalyzes the reversible formation of acyl-phosphate (acyl-PO(4)) from acyl-[acyl-carrier-protein] (acyl-ACP). This enzyme utilizes acyl-ACP as fatty acyl donor, but not acyl-CoA.</text>
</comment>
<comment type="catalytic activity">
    <reaction evidence="1">
        <text>a fatty acyl-[ACP] + phosphate = an acyl phosphate + holo-[ACP]</text>
        <dbReference type="Rhea" id="RHEA:42292"/>
        <dbReference type="Rhea" id="RHEA-COMP:9685"/>
        <dbReference type="Rhea" id="RHEA-COMP:14125"/>
        <dbReference type="ChEBI" id="CHEBI:43474"/>
        <dbReference type="ChEBI" id="CHEBI:59918"/>
        <dbReference type="ChEBI" id="CHEBI:64479"/>
        <dbReference type="ChEBI" id="CHEBI:138651"/>
        <dbReference type="EC" id="2.3.1.274"/>
    </reaction>
</comment>
<comment type="pathway">
    <text evidence="1">Lipid metabolism; phospholipid metabolism.</text>
</comment>
<comment type="subunit">
    <text evidence="1">Homodimer. Probably interacts with PlsY.</text>
</comment>
<comment type="subcellular location">
    <subcellularLocation>
        <location evidence="1">Cytoplasm</location>
    </subcellularLocation>
    <text evidence="1">Associated with the membrane possibly through PlsY.</text>
</comment>
<comment type="similarity">
    <text evidence="1">Belongs to the PlsX family.</text>
</comment>
<accession>B8HY55</accession>
<gene>
    <name evidence="1" type="primary">plsX</name>
    <name type="ordered locus">Cyan7425_2501</name>
</gene>
<proteinExistence type="inferred from homology"/>
<evidence type="ECO:0000255" key="1">
    <source>
        <dbReference type="HAMAP-Rule" id="MF_00019"/>
    </source>
</evidence>
<dbReference type="EC" id="2.3.1.274" evidence="1"/>
<dbReference type="EMBL" id="CP001344">
    <property type="protein sequence ID" value="ACL44858.1"/>
    <property type="molecule type" value="Genomic_DNA"/>
</dbReference>
<dbReference type="SMR" id="B8HY55"/>
<dbReference type="STRING" id="395961.Cyan7425_2501"/>
<dbReference type="KEGG" id="cyn:Cyan7425_2501"/>
<dbReference type="eggNOG" id="COG0416">
    <property type="taxonomic scope" value="Bacteria"/>
</dbReference>
<dbReference type="HOGENOM" id="CLU_039379_1_1_3"/>
<dbReference type="OrthoDB" id="9806408at2"/>
<dbReference type="UniPathway" id="UPA00085"/>
<dbReference type="GO" id="GO:0005737">
    <property type="term" value="C:cytoplasm"/>
    <property type="evidence" value="ECO:0007669"/>
    <property type="project" value="UniProtKB-SubCell"/>
</dbReference>
<dbReference type="GO" id="GO:0043811">
    <property type="term" value="F:phosphate:acyl-[acyl carrier protein] acyltransferase activity"/>
    <property type="evidence" value="ECO:0007669"/>
    <property type="project" value="UniProtKB-UniRule"/>
</dbReference>
<dbReference type="GO" id="GO:0006633">
    <property type="term" value="P:fatty acid biosynthetic process"/>
    <property type="evidence" value="ECO:0007669"/>
    <property type="project" value="UniProtKB-UniRule"/>
</dbReference>
<dbReference type="GO" id="GO:0008654">
    <property type="term" value="P:phospholipid biosynthetic process"/>
    <property type="evidence" value="ECO:0007669"/>
    <property type="project" value="UniProtKB-KW"/>
</dbReference>
<dbReference type="Gene3D" id="3.40.718.10">
    <property type="entry name" value="Isopropylmalate Dehydrogenase"/>
    <property type="match status" value="1"/>
</dbReference>
<dbReference type="HAMAP" id="MF_00019">
    <property type="entry name" value="PlsX"/>
    <property type="match status" value="1"/>
</dbReference>
<dbReference type="InterPro" id="IPR003664">
    <property type="entry name" value="FA_synthesis"/>
</dbReference>
<dbReference type="InterPro" id="IPR012281">
    <property type="entry name" value="Phospholipid_synth_PlsX-like"/>
</dbReference>
<dbReference type="NCBIfam" id="TIGR00182">
    <property type="entry name" value="plsX"/>
    <property type="match status" value="1"/>
</dbReference>
<dbReference type="PANTHER" id="PTHR30100">
    <property type="entry name" value="FATTY ACID/PHOSPHOLIPID SYNTHESIS PROTEIN PLSX"/>
    <property type="match status" value="1"/>
</dbReference>
<dbReference type="PANTHER" id="PTHR30100:SF1">
    <property type="entry name" value="PHOSPHATE ACYLTRANSFERASE"/>
    <property type="match status" value="1"/>
</dbReference>
<dbReference type="Pfam" id="PF02504">
    <property type="entry name" value="FA_synthesis"/>
    <property type="match status" value="1"/>
</dbReference>
<dbReference type="PIRSF" id="PIRSF002465">
    <property type="entry name" value="Phsphlp_syn_PlsX"/>
    <property type="match status" value="1"/>
</dbReference>
<dbReference type="SUPFAM" id="SSF53659">
    <property type="entry name" value="Isocitrate/Isopropylmalate dehydrogenase-like"/>
    <property type="match status" value="1"/>
</dbReference>
<feature type="chain" id="PRO_1000193132" description="Phosphate acyltransferase">
    <location>
        <begin position="1"/>
        <end position="344"/>
    </location>
</feature>
<protein>
    <recommendedName>
        <fullName evidence="1">Phosphate acyltransferase</fullName>
        <ecNumber evidence="1">2.3.1.274</ecNumber>
    </recommendedName>
    <alternativeName>
        <fullName evidence="1">Acyl-ACP phosphotransacylase</fullName>
    </alternativeName>
    <alternativeName>
        <fullName evidence="1">Acyl-[acyl-carrier-protein]--phosphate acyltransferase</fullName>
    </alternativeName>
    <alternativeName>
        <fullName evidence="1">Phosphate-acyl-ACP acyltransferase</fullName>
    </alternativeName>
</protein>
<organism>
    <name type="scientific">Cyanothece sp. (strain PCC 7425 / ATCC 29141)</name>
    <dbReference type="NCBI Taxonomy" id="395961"/>
    <lineage>
        <taxon>Bacteria</taxon>
        <taxon>Bacillati</taxon>
        <taxon>Cyanobacteriota</taxon>
        <taxon>Cyanophyceae</taxon>
        <taxon>Gomontiellales</taxon>
        <taxon>Cyanothecaceae</taxon>
        <taxon>Cyanothece</taxon>
    </lineage>
</organism>
<reference key="1">
    <citation type="journal article" date="2011" name="MBio">
        <title>Novel metabolic attributes of the genus Cyanothece, comprising a group of unicellular nitrogen-fixing Cyanobacteria.</title>
        <authorList>
            <person name="Bandyopadhyay A."/>
            <person name="Elvitigala T."/>
            <person name="Welsh E."/>
            <person name="Stockel J."/>
            <person name="Liberton M."/>
            <person name="Min H."/>
            <person name="Sherman L.A."/>
            <person name="Pakrasi H.B."/>
        </authorList>
    </citation>
    <scope>NUCLEOTIDE SEQUENCE [LARGE SCALE GENOMIC DNA]</scope>
    <source>
        <strain>PCC 7425 / ATCC 29141</strain>
    </source>
</reference>
<sequence length="344" mass="36569">MGATRARIAVDAMGGDHAPDQIVAGALRAREELEVEVLLVGDPDQIHSAVKHHNNSSAIEIVPAEGVIEMHEEPLSGIKRKPRASINVAMNLVKEKQADAVVSAGHSGAAMAAALLRLGRLPGIDRPAIGAVLPTLIPGKAVLILDVGANVDCRPKFLEQFALMGTIYSQYVLGVEKPQVGLLNIGEEECKGNDLALRTYEILKENTQIPFVGNAEGRDVLSGQFDVIVCDGFVGNVLLKFAEAVGEVALQILREELPRGLHGQVGTALLKPNLRRIKQRMDHAEHGGGLLLGVNGVCIISHGSSQAPSIFNAIRLAKEAVDHQVSDRIQASCRLTANPVVDGN</sequence>
<keyword id="KW-0963">Cytoplasm</keyword>
<keyword id="KW-0444">Lipid biosynthesis</keyword>
<keyword id="KW-0443">Lipid metabolism</keyword>
<keyword id="KW-0594">Phospholipid biosynthesis</keyword>
<keyword id="KW-1208">Phospholipid metabolism</keyword>
<keyword id="KW-0808">Transferase</keyword>